<evidence type="ECO:0000250" key="1">
    <source>
        <dbReference type="UniProtKB" id="A0A023I7E1"/>
    </source>
</evidence>
<evidence type="ECO:0000255" key="2">
    <source>
        <dbReference type="PROSITE-ProRule" id="PRU00498"/>
    </source>
</evidence>
<evidence type="ECO:0000255" key="3">
    <source>
        <dbReference type="PROSITE-ProRule" id="PRU01352"/>
    </source>
</evidence>
<evidence type="ECO:0000269" key="4">
    <source>
    </source>
</evidence>
<evidence type="ECO:0000269" key="5">
    <source>
    </source>
</evidence>
<evidence type="ECO:0000269" key="6">
    <source>
    </source>
</evidence>
<evidence type="ECO:0000269" key="7">
    <source>
    </source>
</evidence>
<evidence type="ECO:0000303" key="8">
    <source>
    </source>
</evidence>
<evidence type="ECO:0000303" key="9">
    <source>
    </source>
</evidence>
<evidence type="ECO:0000305" key="10"/>
<evidence type="ECO:0000305" key="11">
    <source>
    </source>
</evidence>
<evidence type="ECO:0000305" key="12">
    <source>
    </source>
</evidence>
<evidence type="ECO:0000312" key="13">
    <source>
        <dbReference type="EMBL" id="BAA11407.1"/>
    </source>
</evidence>
<evidence type="ECO:0000312" key="14">
    <source>
        <dbReference type="EMBL" id="CAA71307.1"/>
    </source>
</evidence>
<accession>P93159</accession>
<accession>Q9FST0</accession>
<proteinExistence type="evidence at protein level"/>
<gene>
    <name evidence="14" type="primary">GBP</name>
</gene>
<sequence>MVNIQTNTSYIFPQTQSTVLPDPSKFFSSNLLSSPLPTNSFFQNFVLKNGDQQEYIHPYLIKSSNSSLSLSYPSRQASSAVIFQVFNPDLTISAPQGPKQGPPGKHLISSYSDLSVTLDFPSSNLSFFLVRGSPYLTVSVTQPTPLSITTIHSILSFSSNDSNTKYTFQFNNGQTWLLYATSPIKLNHTLSEITSNAFSGIIRIALLPDSDSKHEAVLDKYSSCYPVSGKAVFREPFCVEYNWEKKDSGDLLLLAHPLHVQLLRNGDNDVKILEDLKYKSIDGDLVGVVGDSWVLKTDPLFVTWHSIKGIKEESHDEIVSALSKDVESLDSSSITTTESYFYGKLIARAARLVLIAEELNYPDVIPKVRNFLKETIEPWLEGTFSGNGFLHDEKWGGIITQKGSTDAGGDFGFGIYNDHHYHLGYFIYGIAVLTKLDPAWGRKYKPQAYSIVQDFLNLDTKLNSNYTRLRCFDPYVLHSWAGGLTEFTDGRNQESTSEAVSAYYSAALMGLAYGDAPLVALGSTLTALEIEGTKMWWHVKEGGTLYEKEFTQENRVMGVLWSNKRDTGLWFAPAEWKECRLGIQLLPLAPISEAIFSNVDFVKELVEWTLPALDREGGVGEGWKGFVYALEGVYDNESALQKIRNLKGFDGGNSLTNLLWWIHSRSDE</sequence>
<keyword id="KW-0119">Carbohydrate metabolism</keyword>
<keyword id="KW-0134">Cell wall</keyword>
<keyword id="KW-0961">Cell wall biogenesis/degradation</keyword>
<keyword id="KW-0903">Direct protein sequencing</keyword>
<keyword id="KW-0325">Glycoprotein</keyword>
<keyword id="KW-0326">Glycosidase</keyword>
<keyword id="KW-0378">Hydrolase</keyword>
<keyword id="KW-0624">Polysaccharide degradation</keyword>
<keyword id="KW-1185">Reference proteome</keyword>
<keyword id="KW-0964">Secreted</keyword>
<comment type="function">
    <text evidence="5 6 7">Cleaves internal linkages in 1,3-beta-glucan (PubMed:14578352, PubMed:16297387). Beta-glucan, a polysaccharide constituent of fungal cell walls, can act as an elicitor in the plant, triggering defense responses including phytoalexin synthesis (PubMed:9023377).</text>
</comment>
<comment type="catalytic activity">
    <reaction evidence="5 6">
        <text>Hydrolysis of (1-&gt;3)-beta-D-glucosidic linkages in (1-&gt;3)-beta-D-glucans.</text>
        <dbReference type="EC" id="3.2.1.39"/>
    </reaction>
</comment>
<comment type="subcellular location">
    <subcellularLocation>
        <location evidence="5 11 12">Secreted</location>
        <location evidence="5 11 12">Cell wall</location>
    </subcellularLocation>
</comment>
<comment type="tissue specificity">
    <text evidence="4 5 7">Expressed in roots (at protein level) (PubMed:11030428, PubMed:14578352, PubMed:9023377). Expressed in leaves (PubMed:9023377).</text>
</comment>
<comment type="similarity">
    <text evidence="3 10">Belongs to the glycosyl hydrolase 81 family.</text>
</comment>
<organism evidence="13">
    <name type="scientific">Glycine max</name>
    <name type="common">Soybean</name>
    <name type="synonym">Glycine hispida</name>
    <dbReference type="NCBI Taxonomy" id="3847"/>
    <lineage>
        <taxon>Eukaryota</taxon>
        <taxon>Viridiplantae</taxon>
        <taxon>Streptophyta</taxon>
        <taxon>Embryophyta</taxon>
        <taxon>Tracheophyta</taxon>
        <taxon>Spermatophyta</taxon>
        <taxon>Magnoliopsida</taxon>
        <taxon>eudicotyledons</taxon>
        <taxon>Gunneridae</taxon>
        <taxon>Pentapetalae</taxon>
        <taxon>rosids</taxon>
        <taxon>fabids</taxon>
        <taxon>Fabales</taxon>
        <taxon>Fabaceae</taxon>
        <taxon>Papilionoideae</taxon>
        <taxon>50 kb inversion clade</taxon>
        <taxon>NPAAA clade</taxon>
        <taxon>indigoferoid/millettioid clade</taxon>
        <taxon>Phaseoleae</taxon>
        <taxon>Glycine</taxon>
        <taxon>Glycine subgen. Soja</taxon>
    </lineage>
</organism>
<protein>
    <recommendedName>
        <fullName evidence="10">Glucan endo-1,3-beta-D-glucosidase</fullName>
        <shortName evidence="10">Endo-1,3-beta-glucanase</shortName>
        <ecNumber evidence="5 6">3.2.1.39</ecNumber>
    </recommendedName>
    <alternativeName>
        <fullName evidence="9">Beta-glucan elicitor-binding protein</fullName>
        <shortName evidence="9">GEBP</shortName>
    </alternativeName>
    <alternativeName>
        <fullName evidence="10">Laminarinase</fullName>
    </alternativeName>
</protein>
<dbReference type="EC" id="3.2.1.39" evidence="5 6"/>
<dbReference type="EMBL" id="D78510">
    <property type="protein sequence ID" value="BAA11407.1"/>
    <property type="molecule type" value="mRNA"/>
</dbReference>
<dbReference type="EMBL" id="Y10257">
    <property type="protein sequence ID" value="CAA71307.1"/>
    <property type="molecule type" value="mRNA"/>
</dbReference>
<dbReference type="PIR" id="T07142">
    <property type="entry name" value="T07142"/>
</dbReference>
<dbReference type="SMR" id="P93159"/>
<dbReference type="CAZy" id="GH81">
    <property type="family name" value="Glycoside Hydrolase Family 81"/>
</dbReference>
<dbReference type="Proteomes" id="UP000008827">
    <property type="component" value="Unplaced"/>
</dbReference>
<dbReference type="ExpressionAtlas" id="P93159">
    <property type="expression patterns" value="baseline and differential"/>
</dbReference>
<dbReference type="GO" id="GO:0005576">
    <property type="term" value="C:extracellular region"/>
    <property type="evidence" value="ECO:0007669"/>
    <property type="project" value="UniProtKB-KW"/>
</dbReference>
<dbReference type="GO" id="GO:0009505">
    <property type="term" value="C:plant-type cell wall"/>
    <property type="evidence" value="ECO:0000314"/>
    <property type="project" value="UniProtKB"/>
</dbReference>
<dbReference type="GO" id="GO:0052861">
    <property type="term" value="F:endo-1,3(4)-beta-glucanase activity"/>
    <property type="evidence" value="ECO:0007669"/>
    <property type="project" value="UniProtKB-EC"/>
</dbReference>
<dbReference type="GO" id="GO:0042973">
    <property type="term" value="F:glucan endo-1,3-beta-D-glucosidase activity"/>
    <property type="evidence" value="ECO:0000314"/>
    <property type="project" value="UniProtKB"/>
</dbReference>
<dbReference type="GO" id="GO:0030247">
    <property type="term" value="F:polysaccharide binding"/>
    <property type="evidence" value="ECO:0000314"/>
    <property type="project" value="UniProtKB"/>
</dbReference>
<dbReference type="GO" id="GO:0071555">
    <property type="term" value="P:cell wall organization"/>
    <property type="evidence" value="ECO:0007669"/>
    <property type="project" value="UniProtKB-KW"/>
</dbReference>
<dbReference type="GO" id="GO:0044347">
    <property type="term" value="P:cell wall polysaccharide catabolic process"/>
    <property type="evidence" value="ECO:0000314"/>
    <property type="project" value="UniProtKB"/>
</dbReference>
<dbReference type="GO" id="GO:0009603">
    <property type="term" value="P:detection of symbiotic fungus"/>
    <property type="evidence" value="ECO:0000314"/>
    <property type="project" value="UniProtKB"/>
</dbReference>
<dbReference type="Gene3D" id="2.70.98.30">
    <property type="entry name" value="Golgi alpha-mannosidase II, domain 4"/>
    <property type="match status" value="1"/>
</dbReference>
<dbReference type="InterPro" id="IPR005200">
    <property type="entry name" value="Endo-beta-glucanase"/>
</dbReference>
<dbReference type="InterPro" id="IPR040720">
    <property type="entry name" value="GH81_C"/>
</dbReference>
<dbReference type="InterPro" id="IPR040451">
    <property type="entry name" value="GH81_N"/>
</dbReference>
<dbReference type="PANTHER" id="PTHR31983">
    <property type="entry name" value="ENDO-1,3(4)-BETA-GLUCANASE 1"/>
    <property type="match status" value="1"/>
</dbReference>
<dbReference type="PANTHER" id="PTHR31983:SF22">
    <property type="entry name" value="GLUCAN ENDO-1,3-BETA-D-GLUCOSIDASE"/>
    <property type="match status" value="1"/>
</dbReference>
<dbReference type="Pfam" id="PF17652">
    <property type="entry name" value="Glyco_hydro81C"/>
    <property type="match status" value="1"/>
</dbReference>
<dbReference type="Pfam" id="PF03639">
    <property type="entry name" value="Glyco_hydro_81"/>
    <property type="match status" value="1"/>
</dbReference>
<dbReference type="PROSITE" id="PS52008">
    <property type="entry name" value="GH81"/>
    <property type="match status" value="1"/>
</dbReference>
<reference evidence="13" key="1">
    <citation type="journal article" date="1997" name="Proc. Natl. Acad. Sci. U.S.A.">
        <title>The structure and function of a soybean beta-glucan-elicitor-binding protein.</title>
        <authorList>
            <person name="Umemoto N."/>
            <person name="Kakitani M."/>
            <person name="Iwamatsu A."/>
            <person name="Yoshikawa M."/>
            <person name="Yamaoka N."/>
            <person name="Ishida I."/>
        </authorList>
    </citation>
    <scope>NUCLEOTIDE SEQUENCE [MRNA]</scope>
    <scope>PROTEIN SEQUENCE OF 2-14; 48-60; 230-235; 271-276; 279-308; 443-459; 540-547 AND 623-641</scope>
    <scope>FUNCTION</scope>
    <scope>SUBCELLULAR LOCATION</scope>
    <scope>TISSUE SPECIFICITY</scope>
    <source>
        <strain evidence="13">Green Homer</strain>
        <tissue evidence="13">Root</tissue>
    </source>
</reference>
<reference evidence="14" key="2">
    <citation type="journal article" date="2000" name="Biol. Chem.">
        <title>The hepta-beta-glucoside elicitor-binding proteins from legumes represent a putative receptor family.</title>
        <authorList>
            <person name="Mithofer A."/>
            <person name="Fliegmann J."/>
            <person name="Neuhaus-Url G."/>
            <person name="Schwarz H."/>
            <person name="Ebel J."/>
        </authorList>
    </citation>
    <scope>NUCLEOTIDE SEQUENCE [MRNA]</scope>
    <scope>SUBCELLULAR LOCATION</scope>
    <scope>TISSUE SPECIFICITY</scope>
    <source>
        <strain evidence="8">cv. 9007</strain>
    </source>
</reference>
<reference evidence="10" key="3">
    <citation type="journal article" date="2004" name="J. Biol. Chem.">
        <title>An ancient enzyme domain hidden in the putative beta-glucan elicitor receptor of soybean may play an active part in the perception of pathogen-associated molecular patterns during broad host resistance.</title>
        <authorList>
            <person name="Fliegmann J."/>
            <person name="Mithofer A."/>
            <person name="Wanner G."/>
            <person name="Ebel J."/>
        </authorList>
    </citation>
    <scope>FUNCTION</scope>
    <scope>CATALYTIC ACTIVITY</scope>
    <scope>SUBCELLULAR LOCATION</scope>
    <scope>TISSUE SPECIFICITY</scope>
    <scope>MUTAGENESIS OF 494-GLU--GLU-498</scope>
</reference>
<reference evidence="10" key="4">
    <citation type="journal article" date="2005" name="FEBS Lett.">
        <title>Catalytic properties of the bifunctional soybean beta-glucan-binding protein, a member of family 81 glycoside hydrolases.</title>
        <authorList>
            <person name="Fliegmann J."/>
            <person name="Montel E."/>
            <person name="Djulic A."/>
            <person name="Cottaz S."/>
            <person name="Driguez H."/>
            <person name="Ebel J."/>
        </authorList>
    </citation>
    <scope>FUNCTION</scope>
    <scope>CATALYTIC ACTIVITY</scope>
</reference>
<feature type="initiator methionine" description="Removed" evidence="7">
    <location>
        <position position="1"/>
    </location>
</feature>
<feature type="chain" id="PRO_0000457072" description="Glucan endo-1,3-beta-D-glucosidase">
    <location>
        <begin position="2"/>
        <end position="668"/>
    </location>
</feature>
<feature type="domain" description="GH81" evidence="3">
    <location>
        <begin position="2"/>
        <end position="668"/>
    </location>
</feature>
<feature type="region of interest" description="beta-sandwich subdomain" evidence="3">
    <location>
        <begin position="2"/>
        <end position="208"/>
    </location>
</feature>
<feature type="region of interest" description="alpha/beta subdomain" evidence="3">
    <location>
        <begin position="209"/>
        <end position="299"/>
    </location>
</feature>
<feature type="region of interest" description="Involved in beta-glucan binding" evidence="7">
    <location>
        <begin position="240"/>
        <end position="443"/>
    </location>
</feature>
<feature type="region of interest" description="(alpha/beta)6 barrel subdomain" evidence="3">
    <location>
        <begin position="309"/>
        <end position="668"/>
    </location>
</feature>
<feature type="region of interest" description="May provide specificity for triple-helical beta-glucan" evidence="1">
    <location>
        <begin position="564"/>
        <end position="566"/>
    </location>
</feature>
<feature type="active site" evidence="3">
    <location>
        <position position="418"/>
    </location>
</feature>
<feature type="active site" evidence="3">
    <location>
        <position position="494"/>
    </location>
</feature>
<feature type="active site" evidence="3">
    <location>
        <position position="498"/>
    </location>
</feature>
<feature type="binding site" evidence="1">
    <location>
        <position position="422"/>
    </location>
    <ligand>
        <name>(1,3-beta-D-glucosyl)n</name>
        <dbReference type="ChEBI" id="CHEBI:37671"/>
    </ligand>
</feature>
<feature type="binding site" evidence="1">
    <location>
        <position position="494"/>
    </location>
    <ligand>
        <name>(1,3-beta-D-glucosyl)n</name>
        <dbReference type="ChEBI" id="CHEBI:37671"/>
    </ligand>
</feature>
<feature type="binding site" evidence="1">
    <location>
        <position position="498"/>
    </location>
    <ligand>
        <name>(1,3-beta-D-glucosyl)n</name>
        <dbReference type="ChEBI" id="CHEBI:37671"/>
    </ligand>
</feature>
<feature type="site" description="Not glycosylated" evidence="12">
    <location>
        <position position="7"/>
    </location>
</feature>
<feature type="site" description="Not glycosylated" evidence="12">
    <location>
        <position position="636"/>
    </location>
</feature>
<feature type="glycosylation site" description="N-linked (GlcNAc...) asparagine" evidence="2">
    <location>
        <position position="65"/>
    </location>
</feature>
<feature type="glycosylation site" description="N-linked (GlcNAc...) asparagine" evidence="2">
    <location>
        <position position="124"/>
    </location>
</feature>
<feature type="glycosylation site" description="N-linked (GlcNAc...) asparagine" evidence="2">
    <location>
        <position position="160"/>
    </location>
</feature>
<feature type="glycosylation site" description="N-linked (GlcNAc...) asparagine" evidence="2">
    <location>
        <position position="187"/>
    </location>
</feature>
<feature type="glycosylation site" description="N-linked (GlcNAc...) asparagine" evidence="2">
    <location>
        <position position="465"/>
    </location>
</feature>
<feature type="mutagenesis site" description="Loss of enzyme activity." evidence="5">
    <original>ESTSE</original>
    <variation>QSTSQ</variation>
    <location>
        <begin position="494"/>
        <end position="498"/>
    </location>
</feature>
<feature type="sequence conflict" description="In Ref. 2; CAA71307." evidence="10" ref="2">
    <original>T</original>
    <variation>A</variation>
    <location>
        <position position="149"/>
    </location>
</feature>
<feature type="sequence conflict" description="In Ref. 2; CAA71307." evidence="10" ref="2">
    <original>A</original>
    <variation>V</variation>
    <location>
        <position position="516"/>
    </location>
</feature>
<name>ENG1_SOYBN</name>